<accession>C1AYV9</accession>
<evidence type="ECO:0000255" key="1">
    <source>
        <dbReference type="HAMAP-Rule" id="MF_01321"/>
    </source>
</evidence>
<feature type="chain" id="PRO_1000165817" description="DNA-directed RNA polymerase subunit beta">
    <location>
        <begin position="1"/>
        <end position="1168"/>
    </location>
</feature>
<dbReference type="EC" id="2.7.7.6" evidence="1"/>
<dbReference type="EMBL" id="AP011115">
    <property type="protein sequence ID" value="BAH49887.1"/>
    <property type="molecule type" value="Genomic_DNA"/>
</dbReference>
<dbReference type="RefSeq" id="WP_012688855.1">
    <property type="nucleotide sequence ID" value="NC_012522.1"/>
</dbReference>
<dbReference type="SMR" id="C1AYV9"/>
<dbReference type="STRING" id="632772.ROP_16400"/>
<dbReference type="KEGG" id="rop:ROP_16400"/>
<dbReference type="PATRIC" id="fig|632772.20.peg.1721"/>
<dbReference type="HOGENOM" id="CLU_000524_4_1_11"/>
<dbReference type="OrthoDB" id="9803954at2"/>
<dbReference type="Proteomes" id="UP000002212">
    <property type="component" value="Chromosome"/>
</dbReference>
<dbReference type="GO" id="GO:0000428">
    <property type="term" value="C:DNA-directed RNA polymerase complex"/>
    <property type="evidence" value="ECO:0007669"/>
    <property type="project" value="UniProtKB-KW"/>
</dbReference>
<dbReference type="GO" id="GO:0003677">
    <property type="term" value="F:DNA binding"/>
    <property type="evidence" value="ECO:0007669"/>
    <property type="project" value="UniProtKB-UniRule"/>
</dbReference>
<dbReference type="GO" id="GO:0003899">
    <property type="term" value="F:DNA-directed RNA polymerase activity"/>
    <property type="evidence" value="ECO:0007669"/>
    <property type="project" value="UniProtKB-UniRule"/>
</dbReference>
<dbReference type="GO" id="GO:0032549">
    <property type="term" value="F:ribonucleoside binding"/>
    <property type="evidence" value="ECO:0007669"/>
    <property type="project" value="InterPro"/>
</dbReference>
<dbReference type="GO" id="GO:0006351">
    <property type="term" value="P:DNA-templated transcription"/>
    <property type="evidence" value="ECO:0007669"/>
    <property type="project" value="UniProtKB-UniRule"/>
</dbReference>
<dbReference type="CDD" id="cd00653">
    <property type="entry name" value="RNA_pol_B_RPB2"/>
    <property type="match status" value="1"/>
</dbReference>
<dbReference type="FunFam" id="3.90.1800.10:FF:000005">
    <property type="entry name" value="DNA-directed RNA polymerase subunit beta"/>
    <property type="match status" value="1"/>
</dbReference>
<dbReference type="Gene3D" id="2.40.50.100">
    <property type="match status" value="1"/>
</dbReference>
<dbReference type="Gene3D" id="2.40.50.150">
    <property type="match status" value="1"/>
</dbReference>
<dbReference type="Gene3D" id="3.90.1100.10">
    <property type="match status" value="1"/>
</dbReference>
<dbReference type="Gene3D" id="2.30.150.10">
    <property type="entry name" value="DNA-directed RNA polymerase, beta subunit, external 1 domain"/>
    <property type="match status" value="1"/>
</dbReference>
<dbReference type="Gene3D" id="2.40.270.10">
    <property type="entry name" value="DNA-directed RNA polymerase, subunit 2, domain 6"/>
    <property type="match status" value="1"/>
</dbReference>
<dbReference type="Gene3D" id="3.90.1800.10">
    <property type="entry name" value="RNA polymerase alpha subunit dimerisation domain"/>
    <property type="match status" value="1"/>
</dbReference>
<dbReference type="Gene3D" id="3.90.1110.10">
    <property type="entry name" value="RNA polymerase Rpb2, domain 2"/>
    <property type="match status" value="1"/>
</dbReference>
<dbReference type="HAMAP" id="MF_01321">
    <property type="entry name" value="RNApol_bact_RpoB"/>
    <property type="match status" value="1"/>
</dbReference>
<dbReference type="InterPro" id="IPR042107">
    <property type="entry name" value="DNA-dir_RNA_pol_bsu_ext_1_sf"/>
</dbReference>
<dbReference type="InterPro" id="IPR019462">
    <property type="entry name" value="DNA-dir_RNA_pol_bsu_external_1"/>
</dbReference>
<dbReference type="InterPro" id="IPR015712">
    <property type="entry name" value="DNA-dir_RNA_pol_su2"/>
</dbReference>
<dbReference type="InterPro" id="IPR007120">
    <property type="entry name" value="DNA-dir_RNAP_su2_dom"/>
</dbReference>
<dbReference type="InterPro" id="IPR037033">
    <property type="entry name" value="DNA-dir_RNAP_su2_hyb_sf"/>
</dbReference>
<dbReference type="InterPro" id="IPR010243">
    <property type="entry name" value="RNA_pol_bsu_bac"/>
</dbReference>
<dbReference type="InterPro" id="IPR007121">
    <property type="entry name" value="RNA_pol_bsu_CS"/>
</dbReference>
<dbReference type="InterPro" id="IPR007644">
    <property type="entry name" value="RNA_pol_bsu_protrusion"/>
</dbReference>
<dbReference type="InterPro" id="IPR007642">
    <property type="entry name" value="RNA_pol_Rpb2_2"/>
</dbReference>
<dbReference type="InterPro" id="IPR037034">
    <property type="entry name" value="RNA_pol_Rpb2_2_sf"/>
</dbReference>
<dbReference type="InterPro" id="IPR007645">
    <property type="entry name" value="RNA_pol_Rpb2_3"/>
</dbReference>
<dbReference type="InterPro" id="IPR007641">
    <property type="entry name" value="RNA_pol_Rpb2_7"/>
</dbReference>
<dbReference type="InterPro" id="IPR014724">
    <property type="entry name" value="RNA_pol_RPB2_OB-fold"/>
</dbReference>
<dbReference type="NCBIfam" id="NF001616">
    <property type="entry name" value="PRK00405.1"/>
    <property type="match status" value="1"/>
</dbReference>
<dbReference type="NCBIfam" id="TIGR02013">
    <property type="entry name" value="rpoB"/>
    <property type="match status" value="1"/>
</dbReference>
<dbReference type="PANTHER" id="PTHR20856">
    <property type="entry name" value="DNA-DIRECTED RNA POLYMERASE I SUBUNIT 2"/>
    <property type="match status" value="1"/>
</dbReference>
<dbReference type="Pfam" id="PF04563">
    <property type="entry name" value="RNA_pol_Rpb2_1"/>
    <property type="match status" value="1"/>
</dbReference>
<dbReference type="Pfam" id="PF04561">
    <property type="entry name" value="RNA_pol_Rpb2_2"/>
    <property type="match status" value="1"/>
</dbReference>
<dbReference type="Pfam" id="PF04565">
    <property type="entry name" value="RNA_pol_Rpb2_3"/>
    <property type="match status" value="1"/>
</dbReference>
<dbReference type="Pfam" id="PF10385">
    <property type="entry name" value="RNA_pol_Rpb2_45"/>
    <property type="match status" value="1"/>
</dbReference>
<dbReference type="Pfam" id="PF00562">
    <property type="entry name" value="RNA_pol_Rpb2_6"/>
    <property type="match status" value="1"/>
</dbReference>
<dbReference type="Pfam" id="PF04560">
    <property type="entry name" value="RNA_pol_Rpb2_7"/>
    <property type="match status" value="1"/>
</dbReference>
<dbReference type="SUPFAM" id="SSF64484">
    <property type="entry name" value="beta and beta-prime subunits of DNA dependent RNA-polymerase"/>
    <property type="match status" value="1"/>
</dbReference>
<dbReference type="PROSITE" id="PS01166">
    <property type="entry name" value="RNA_POL_BETA"/>
    <property type="match status" value="1"/>
</dbReference>
<protein>
    <recommendedName>
        <fullName evidence="1">DNA-directed RNA polymerase subunit beta</fullName>
        <shortName evidence="1">RNAP subunit beta</shortName>
        <ecNumber evidence="1">2.7.7.6</ecNumber>
    </recommendedName>
    <alternativeName>
        <fullName evidence="1">RNA polymerase subunit beta</fullName>
    </alternativeName>
    <alternativeName>
        <fullName evidence="1">Transcriptase subunit beta</fullName>
    </alternativeName>
</protein>
<reference key="1">
    <citation type="submission" date="2009-03" db="EMBL/GenBank/DDBJ databases">
        <title>Comparison of the complete genome sequences of Rhodococcus erythropolis PR4 and Rhodococcus opacus B4.</title>
        <authorList>
            <person name="Takarada H."/>
            <person name="Sekine M."/>
            <person name="Hosoyama A."/>
            <person name="Yamada R."/>
            <person name="Fujisawa T."/>
            <person name="Omata S."/>
            <person name="Shimizu A."/>
            <person name="Tsukatani N."/>
            <person name="Tanikawa S."/>
            <person name="Fujita N."/>
            <person name="Harayama S."/>
        </authorList>
    </citation>
    <scope>NUCLEOTIDE SEQUENCE [LARGE SCALE GENOMIC DNA]</scope>
    <source>
        <strain>B4</strain>
    </source>
</reference>
<name>RPOB_RHOOB</name>
<proteinExistence type="inferred from homology"/>
<organism>
    <name type="scientific">Rhodococcus opacus (strain B4)</name>
    <dbReference type="NCBI Taxonomy" id="632772"/>
    <lineage>
        <taxon>Bacteria</taxon>
        <taxon>Bacillati</taxon>
        <taxon>Actinomycetota</taxon>
        <taxon>Actinomycetes</taxon>
        <taxon>Mycobacteriales</taxon>
        <taxon>Nocardiaceae</taxon>
        <taxon>Rhodococcus</taxon>
    </lineage>
</organism>
<comment type="function">
    <text evidence="1">DNA-dependent RNA polymerase catalyzes the transcription of DNA into RNA using the four ribonucleoside triphosphates as substrates.</text>
</comment>
<comment type="catalytic activity">
    <reaction evidence="1">
        <text>RNA(n) + a ribonucleoside 5'-triphosphate = RNA(n+1) + diphosphate</text>
        <dbReference type="Rhea" id="RHEA:21248"/>
        <dbReference type="Rhea" id="RHEA-COMP:14527"/>
        <dbReference type="Rhea" id="RHEA-COMP:17342"/>
        <dbReference type="ChEBI" id="CHEBI:33019"/>
        <dbReference type="ChEBI" id="CHEBI:61557"/>
        <dbReference type="ChEBI" id="CHEBI:140395"/>
        <dbReference type="EC" id="2.7.7.6"/>
    </reaction>
</comment>
<comment type="subunit">
    <text evidence="1">The RNAP catalytic core consists of 2 alpha, 1 beta, 1 beta' and 1 omega subunit. When a sigma factor is associated with the core the holoenzyme is formed, which can initiate transcription.</text>
</comment>
<comment type="similarity">
    <text evidence="1">Belongs to the RNA polymerase beta chain family.</text>
</comment>
<keyword id="KW-0240">DNA-directed RNA polymerase</keyword>
<keyword id="KW-0548">Nucleotidyltransferase</keyword>
<keyword id="KW-0804">Transcription</keyword>
<keyword id="KW-0808">Transferase</keyword>
<sequence>MLEGRILAVSSQTKAVSGIPGAPKRVSFAKIREPLEVPGLLDLQTDSFEWLIGAQSWRERAAARGDSAISGGLEDILAELSPIEDFSGSMSLSFSDPRFDEVKASTDECKDKDMTYAAPLFVTAEFINNNTGEIKSQTVFMGDFPMMTDKGTFIINGTERVVVSQLVRSPGVYFDHSVDKGTEKDLHSVKVIPGRGAWLEFDVDKRDTVGVRIDRKRRQPVTVLLKALGWTTEQIAERFGFSEILMATLEKDNTAGTDEALLDIYRKLRPGEPPTKESAQTLLENLFFKDKRYDLARVGRYKINKKLGLNTGQPIVASTLTEEDIVATIEYLVRLHAGDTEMTAPGGVAVPVEVDDIDHFGNRRLRTVGELIQNQIRVGLSRMERVVRERMTTQDVEAITPQTLINIRPVVAAIKEFFGTSQLSQFMDQNNPLSGLTHKRRLSALGPGGLSRERAGLEVRDVHPSHYGRMCPIETPEGPNIGLIGSLSVYARVNPFGFIETPYRKVEGGQVTDQVDYLTADEEDRHVVAQANSAVDANGHFTDDRILVRRKGGEVEFVSSAEIDYMDVSPRQMVSVATAMIPFLEHDDANRALMGANMQRQAVPLVRSEAPLVGTGMELRAAVDAGDVIVTEKTGVVEEVSADYVTVMADDGSRKTYRMRKFARSNQGTCANQRPIVDEGQRVESGQVLADGPCTENGEMALGKNLLVAIMPWEGHNYEDAIILSQRLVEEDVLTSIHIEEHEIDARDTKLGAEEITRDIPNVSDEVLADLDERGIIRIGAEVRDGDVLVGKVTPKGETELTPEERLLRAIFGEKAREVRDTSLKVPHGETGKVIGIRVFSRDDDDDLPPGVNELVRVYVAQKRKIQDGDKLAGRHGNKGVIGKILPQEDMPFLPDGTPIDIILNTHGVPRRMNIGQILETHLGWIGKTGWNVQIAGDGSRPDWAEQLPEEMLSAPSDSNIATPVFDGAKEDELTGLLGSTLPNRDGEVMVASDGKATLFDGRSGEPFPYPVSVGYMYIIKLHHLVDDKIHARSTGPYSMITQQPLGGKAQFGGQRFGEMECWAMQAYGAAYTLQELLTIKSDDVVGRVKVYEAIVKGENIPEPGIPESFKVLLKELQSLCLNVEVLSSDGAAIAMADGDDEDLERAAANLGINLSRNEAATVDDLAN</sequence>
<gene>
    <name evidence="1" type="primary">rpoB</name>
    <name type="ordered locus">ROP_16400</name>
</gene>